<sequence>MISDLRSSILPPLKWLSDQDPPVPAGVSDWLMELGSMTRRFENHCTCIRIEPQRECFITRDNLKEEAAHLPNSTCYWLREVILMGDNQPWLLGRTVIPQETLFEHNEALINLGTVPLGRYLFSSGNLTRDYIYIGRQGALWARRSRLRLAGKPLLLTELFLAASPLYTTNSI</sequence>
<dbReference type="EC" id="4.1.3.40" evidence="1"/>
<dbReference type="EMBL" id="BX897700">
    <property type="protein sequence ID" value="CAF26398.1"/>
    <property type="molecule type" value="Genomic_DNA"/>
</dbReference>
<dbReference type="RefSeq" id="WP_011179627.1">
    <property type="nucleotide sequence ID" value="NC_005955.1"/>
</dbReference>
<dbReference type="SMR" id="Q6FZ67"/>
<dbReference type="KEGG" id="bqu:BQ09210"/>
<dbReference type="eggNOG" id="COG3161">
    <property type="taxonomic scope" value="Bacteria"/>
</dbReference>
<dbReference type="HOGENOM" id="CLU_096824_1_0_5"/>
<dbReference type="OrthoDB" id="9789493at2"/>
<dbReference type="UniPathway" id="UPA00232"/>
<dbReference type="Proteomes" id="UP000000597">
    <property type="component" value="Chromosome"/>
</dbReference>
<dbReference type="GO" id="GO:0005829">
    <property type="term" value="C:cytosol"/>
    <property type="evidence" value="ECO:0007669"/>
    <property type="project" value="TreeGrafter"/>
</dbReference>
<dbReference type="GO" id="GO:0008813">
    <property type="term" value="F:chorismate lyase activity"/>
    <property type="evidence" value="ECO:0007669"/>
    <property type="project" value="UniProtKB-UniRule"/>
</dbReference>
<dbReference type="GO" id="GO:0042866">
    <property type="term" value="P:pyruvate biosynthetic process"/>
    <property type="evidence" value="ECO:0007669"/>
    <property type="project" value="UniProtKB-UniRule"/>
</dbReference>
<dbReference type="GO" id="GO:0006744">
    <property type="term" value="P:ubiquinone biosynthetic process"/>
    <property type="evidence" value="ECO:0007669"/>
    <property type="project" value="UniProtKB-UniRule"/>
</dbReference>
<dbReference type="Gene3D" id="3.40.1410.10">
    <property type="entry name" value="Chorismate lyase-like"/>
    <property type="match status" value="1"/>
</dbReference>
<dbReference type="HAMAP" id="MF_01632">
    <property type="entry name" value="UbiC"/>
    <property type="match status" value="1"/>
</dbReference>
<dbReference type="InterPro" id="IPR007440">
    <property type="entry name" value="Chorismate--pyruvate_lyase"/>
</dbReference>
<dbReference type="InterPro" id="IPR028978">
    <property type="entry name" value="Chorismate_lyase_/UTRA_dom_sf"/>
</dbReference>
<dbReference type="NCBIfam" id="NF008656">
    <property type="entry name" value="PRK11655.1"/>
    <property type="match status" value="1"/>
</dbReference>
<dbReference type="PANTHER" id="PTHR38683">
    <property type="entry name" value="CHORISMATE PYRUVATE-LYASE"/>
    <property type="match status" value="1"/>
</dbReference>
<dbReference type="PANTHER" id="PTHR38683:SF1">
    <property type="entry name" value="CHORISMATE PYRUVATE-LYASE"/>
    <property type="match status" value="1"/>
</dbReference>
<dbReference type="Pfam" id="PF04345">
    <property type="entry name" value="Chor_lyase"/>
    <property type="match status" value="1"/>
</dbReference>
<dbReference type="SUPFAM" id="SSF64288">
    <property type="entry name" value="Chorismate lyase-like"/>
    <property type="match status" value="1"/>
</dbReference>
<accession>Q6FZ67</accession>
<proteinExistence type="inferred from homology"/>
<reference key="1">
    <citation type="journal article" date="2004" name="Proc. Natl. Acad. Sci. U.S.A.">
        <title>The louse-borne human pathogen Bartonella quintana is a genomic derivative of the zoonotic agent Bartonella henselae.</title>
        <authorList>
            <person name="Alsmark U.C.M."/>
            <person name="Frank A.C."/>
            <person name="Karlberg E.O."/>
            <person name="Legault B.-A."/>
            <person name="Ardell D.H."/>
            <person name="Canbaeck B."/>
            <person name="Eriksson A.-S."/>
            <person name="Naeslund A.K."/>
            <person name="Handley S.A."/>
            <person name="Huvet M."/>
            <person name="La Scola B."/>
            <person name="Holmberg M."/>
            <person name="Andersson S.G.E."/>
        </authorList>
    </citation>
    <scope>NUCLEOTIDE SEQUENCE [LARGE SCALE GENOMIC DNA]</scope>
    <source>
        <strain>Toulouse</strain>
    </source>
</reference>
<gene>
    <name evidence="1" type="primary">ubiC</name>
    <name type="ordered locus">BQ09210</name>
</gene>
<organism>
    <name type="scientific">Bartonella quintana (strain Toulouse)</name>
    <name type="common">Rochalimaea quintana</name>
    <dbReference type="NCBI Taxonomy" id="283165"/>
    <lineage>
        <taxon>Bacteria</taxon>
        <taxon>Pseudomonadati</taxon>
        <taxon>Pseudomonadota</taxon>
        <taxon>Alphaproteobacteria</taxon>
        <taxon>Hyphomicrobiales</taxon>
        <taxon>Bartonellaceae</taxon>
        <taxon>Bartonella</taxon>
    </lineage>
</organism>
<name>UBIC_BARQU</name>
<evidence type="ECO:0000255" key="1">
    <source>
        <dbReference type="HAMAP-Rule" id="MF_01632"/>
    </source>
</evidence>
<feature type="chain" id="PRO_0000240535" description="Probable chorismate pyruvate-lyase">
    <location>
        <begin position="1"/>
        <end position="172"/>
    </location>
</feature>
<feature type="binding site" evidence="1">
    <location>
        <position position="37"/>
    </location>
    <ligand>
        <name>substrate</name>
    </ligand>
</feature>
<feature type="binding site" evidence="1">
    <location>
        <position position="79"/>
    </location>
    <ligand>
        <name>substrate</name>
    </ligand>
</feature>
<feature type="binding site" evidence="1">
    <location>
        <position position="117"/>
    </location>
    <ligand>
        <name>substrate</name>
    </ligand>
</feature>
<feature type="binding site" evidence="1">
    <location>
        <position position="158"/>
    </location>
    <ligand>
        <name>substrate</name>
    </ligand>
</feature>
<protein>
    <recommendedName>
        <fullName evidence="1">Probable chorismate pyruvate-lyase</fullName>
        <shortName evidence="1">CL</shortName>
        <shortName evidence="1">CPL</shortName>
        <ecNumber evidence="1">4.1.3.40</ecNumber>
    </recommendedName>
</protein>
<keyword id="KW-0963">Cytoplasm</keyword>
<keyword id="KW-0456">Lyase</keyword>
<keyword id="KW-0670">Pyruvate</keyword>
<keyword id="KW-0831">Ubiquinone biosynthesis</keyword>
<comment type="function">
    <text evidence="1">Removes the pyruvyl group from chorismate, with concomitant aromatization of the ring, to provide 4-hydroxybenzoate (4HB) for the ubiquinone pathway.</text>
</comment>
<comment type="catalytic activity">
    <reaction evidence="1">
        <text>chorismate = 4-hydroxybenzoate + pyruvate</text>
        <dbReference type="Rhea" id="RHEA:16505"/>
        <dbReference type="ChEBI" id="CHEBI:15361"/>
        <dbReference type="ChEBI" id="CHEBI:17879"/>
        <dbReference type="ChEBI" id="CHEBI:29748"/>
        <dbReference type="EC" id="4.1.3.40"/>
    </reaction>
</comment>
<comment type="pathway">
    <text evidence="1">Cofactor biosynthesis; ubiquinone biosynthesis.</text>
</comment>
<comment type="subcellular location">
    <subcellularLocation>
        <location evidence="1">Cytoplasm</location>
    </subcellularLocation>
</comment>
<comment type="similarity">
    <text evidence="1">Belongs to the UbiC family.</text>
</comment>